<accession>P38877</accession>
<accession>D3DLD9</accession>
<feature type="chain" id="PRO_0000079494" description="Chromosome transmission fidelity protein 8">
    <location>
        <begin position="1"/>
        <end position="133"/>
    </location>
</feature>
<feature type="strand" evidence="4">
    <location>
        <begin position="3"/>
        <end position="7"/>
    </location>
</feature>
<feature type="helix" evidence="4">
    <location>
        <begin position="9"/>
        <end position="14"/>
    </location>
</feature>
<feature type="strand" evidence="4">
    <location>
        <begin position="22"/>
        <end position="25"/>
    </location>
</feature>
<feature type="strand" evidence="4">
    <location>
        <begin position="29"/>
        <end position="40"/>
    </location>
</feature>
<feature type="helix" evidence="4">
    <location>
        <begin position="45"/>
        <end position="50"/>
    </location>
</feature>
<feature type="turn" evidence="4">
    <location>
        <begin position="54"/>
        <end position="56"/>
    </location>
</feature>
<feature type="strand" evidence="4">
    <location>
        <begin position="59"/>
        <end position="62"/>
    </location>
</feature>
<feature type="strand" evidence="4">
    <location>
        <begin position="65"/>
        <end position="84"/>
    </location>
</feature>
<feature type="turn" evidence="4">
    <location>
        <begin position="85"/>
        <end position="87"/>
    </location>
</feature>
<feature type="strand" evidence="4">
    <location>
        <begin position="88"/>
        <end position="107"/>
    </location>
</feature>
<feature type="turn" evidence="4">
    <location>
        <begin position="108"/>
        <end position="111"/>
    </location>
</feature>
<feature type="strand" evidence="4">
    <location>
        <begin position="112"/>
        <end position="125"/>
    </location>
</feature>
<protein>
    <recommendedName>
        <fullName>Chromosome transmission fidelity protein 8</fullName>
    </recommendedName>
</protein>
<dbReference type="EMBL" id="U53671">
    <property type="protein sequence ID" value="AAA98983.1"/>
    <property type="molecule type" value="Genomic_DNA"/>
</dbReference>
<dbReference type="EMBL" id="U00030">
    <property type="protein sequence ID" value="AAB68366.1"/>
    <property type="molecule type" value="Genomic_DNA"/>
</dbReference>
<dbReference type="EMBL" id="AY558287">
    <property type="protein sequence ID" value="AAS56613.1"/>
    <property type="molecule type" value="Genomic_DNA"/>
</dbReference>
<dbReference type="EMBL" id="BK006934">
    <property type="protein sequence ID" value="DAA06883.1"/>
    <property type="molecule type" value="Genomic_DNA"/>
</dbReference>
<dbReference type="PIR" id="S46688">
    <property type="entry name" value="S46688"/>
</dbReference>
<dbReference type="RefSeq" id="NP_012061.3">
    <property type="nucleotide sequence ID" value="NM_001179322.3"/>
</dbReference>
<dbReference type="PDB" id="5MSM">
    <property type="method" value="X-ray"/>
    <property type="resolution" value="2.29 A"/>
    <property type="chains" value="B/E=1-133"/>
</dbReference>
<dbReference type="PDB" id="5OKC">
    <property type="method" value="X-ray"/>
    <property type="resolution" value="2.30 A"/>
    <property type="chains" value="F/H=1-133"/>
</dbReference>
<dbReference type="PDB" id="5OKI">
    <property type="method" value="X-ray"/>
    <property type="resolution" value="4.50 A"/>
    <property type="chains" value="D/H=1-133"/>
</dbReference>
<dbReference type="PDB" id="6S1C">
    <property type="method" value="X-ray"/>
    <property type="resolution" value="6.10 A"/>
    <property type="chains" value="C/G=1-133"/>
</dbReference>
<dbReference type="PDB" id="6S2E">
    <property type="method" value="EM"/>
    <property type="resolution" value="4.20 A"/>
    <property type="chains" value="D=1-133"/>
</dbReference>
<dbReference type="PDB" id="6S2F">
    <property type="method" value="EM"/>
    <property type="resolution" value="5.80 A"/>
    <property type="chains" value="D=1-133"/>
</dbReference>
<dbReference type="PDB" id="8TW9">
    <property type="method" value="EM"/>
    <property type="resolution" value="3.60 A"/>
    <property type="chains" value="D=2-133"/>
</dbReference>
<dbReference type="PDB" id="8TWA">
    <property type="method" value="EM"/>
    <property type="resolution" value="4.10 A"/>
    <property type="chains" value="D=2-133"/>
</dbReference>
<dbReference type="PDBsum" id="5MSM"/>
<dbReference type="PDBsum" id="5OKC"/>
<dbReference type="PDBsum" id="5OKI"/>
<dbReference type="PDBsum" id="6S1C"/>
<dbReference type="PDBsum" id="6S2E"/>
<dbReference type="PDBsum" id="6S2F"/>
<dbReference type="PDBsum" id="8TW9"/>
<dbReference type="PDBsum" id="8TWA"/>
<dbReference type="EMDB" id="EMD-10088"/>
<dbReference type="EMDB" id="EMD-10089"/>
<dbReference type="EMDB" id="EMD-41663"/>
<dbReference type="EMDB" id="EMD-41664"/>
<dbReference type="SMR" id="P38877"/>
<dbReference type="BioGRID" id="36625">
    <property type="interactions" value="656"/>
</dbReference>
<dbReference type="ComplexPortal" id="CPX-1731">
    <property type="entry name" value="CTF18-RFC complex"/>
</dbReference>
<dbReference type="DIP" id="DIP-2727N"/>
<dbReference type="FunCoup" id="P38877">
    <property type="interactions" value="82"/>
</dbReference>
<dbReference type="IntAct" id="P38877">
    <property type="interactions" value="9"/>
</dbReference>
<dbReference type="MINT" id="P38877"/>
<dbReference type="STRING" id="4932.YHR191C"/>
<dbReference type="iPTMnet" id="P38877"/>
<dbReference type="PaxDb" id="4932-YHR191C"/>
<dbReference type="PeptideAtlas" id="P38877"/>
<dbReference type="EnsemblFungi" id="YHR191C_mRNA">
    <property type="protein sequence ID" value="YHR191C"/>
    <property type="gene ID" value="YHR191C"/>
</dbReference>
<dbReference type="GeneID" id="856598"/>
<dbReference type="KEGG" id="sce:YHR191C"/>
<dbReference type="AGR" id="SGD:S000001234"/>
<dbReference type="SGD" id="S000001234">
    <property type="gene designation" value="CTF8"/>
</dbReference>
<dbReference type="VEuPathDB" id="FungiDB:YHR191C"/>
<dbReference type="eggNOG" id="KOG4487">
    <property type="taxonomic scope" value="Eukaryota"/>
</dbReference>
<dbReference type="HOGENOM" id="CLU_090690_1_0_1"/>
<dbReference type="InParanoid" id="P38877"/>
<dbReference type="OMA" id="QRPLPIM"/>
<dbReference type="OrthoDB" id="121932at2759"/>
<dbReference type="BioCyc" id="YEAST:G3O-31219-MONOMER"/>
<dbReference type="BioGRID-ORCS" id="856598">
    <property type="hits" value="9 hits in 10 CRISPR screens"/>
</dbReference>
<dbReference type="PRO" id="PR:P38877"/>
<dbReference type="Proteomes" id="UP000002311">
    <property type="component" value="Chromosome VIII"/>
</dbReference>
<dbReference type="RNAct" id="P38877">
    <property type="molecule type" value="protein"/>
</dbReference>
<dbReference type="GO" id="GO:0031390">
    <property type="term" value="C:Ctf18 RFC-like complex"/>
    <property type="evidence" value="ECO:0000353"/>
    <property type="project" value="ComplexPortal"/>
</dbReference>
<dbReference type="GO" id="GO:0003677">
    <property type="term" value="F:DNA binding"/>
    <property type="evidence" value="ECO:0007669"/>
    <property type="project" value="UniProtKB-KW"/>
</dbReference>
<dbReference type="GO" id="GO:0006260">
    <property type="term" value="P:DNA replication"/>
    <property type="evidence" value="ECO:0007669"/>
    <property type="project" value="UniProtKB-KW"/>
</dbReference>
<dbReference type="GO" id="GO:0035753">
    <property type="term" value="P:maintenance of DNA trinucleotide repeats"/>
    <property type="evidence" value="ECO:0000315"/>
    <property type="project" value="SGD"/>
</dbReference>
<dbReference type="GO" id="GO:0007064">
    <property type="term" value="P:mitotic sister chromatid cohesion"/>
    <property type="evidence" value="ECO:0000315"/>
    <property type="project" value="SGD"/>
</dbReference>
<dbReference type="GO" id="GO:0034398">
    <property type="term" value="P:telomere tethering at nuclear periphery"/>
    <property type="evidence" value="ECO:0000315"/>
    <property type="project" value="SGD"/>
</dbReference>
<dbReference type="InterPro" id="IPR018607">
    <property type="entry name" value="Ctf8"/>
</dbReference>
<dbReference type="PANTHER" id="PTHR28605:SF1">
    <property type="entry name" value="CHROMOSOME TRANSMISSION FIDELITY FACTOR 8"/>
    <property type="match status" value="1"/>
</dbReference>
<dbReference type="PANTHER" id="PTHR28605">
    <property type="entry name" value="CTF8, CHROMOSOME TRANSMISSION FIDELITY FACTOR 8 HOMOLOG (S. CEREVISIAE)"/>
    <property type="match status" value="1"/>
</dbReference>
<dbReference type="Pfam" id="PF09696">
    <property type="entry name" value="Ctf8"/>
    <property type="match status" value="1"/>
</dbReference>
<sequence length="133" mass="15169">MPSVDIDASQWQKLTQSREKQTTVITPLGMMMLEIQGELELPKDFASLARRDSPNEGRFSEQDGETLIRFGSLQIDGERATLFVGKKQRLLGKVTKLDVPMGIMHFNSKDNKVELVDVMKYKVIFKDRPLPIM</sequence>
<name>CTF8_YEAST</name>
<proteinExistence type="evidence at protein level"/>
<gene>
    <name type="primary">CTF8</name>
    <name type="ordered locus">YHR191C</name>
</gene>
<reference key="1">
    <citation type="journal article" date="2001" name="Mol. Cell">
        <title>Identification of RFC(Ctf18p, Ctf8p, Dcc1p): an alternative RFC complex required for sister chromatid cohesion in S. cerevisiae.</title>
        <authorList>
            <person name="Mayer M.L."/>
            <person name="Gygi S.P."/>
            <person name="Aebersold R."/>
            <person name="Hieter P."/>
        </authorList>
    </citation>
    <scope>NUCLEOTIDE SEQUENCE [GENOMIC DNA]</scope>
    <scope>FUNCTION</scope>
    <scope>IDENTIFICATION IN THE CTF18-RFC COMPLEX</scope>
    <scope>SUBCELLULAR LOCATION</scope>
</reference>
<reference key="2">
    <citation type="journal article" date="1994" name="Science">
        <title>Complete nucleotide sequence of Saccharomyces cerevisiae chromosome VIII.</title>
        <authorList>
            <person name="Johnston M."/>
            <person name="Andrews S."/>
            <person name="Brinkman R."/>
            <person name="Cooper J."/>
            <person name="Ding H."/>
            <person name="Dover J."/>
            <person name="Du Z."/>
            <person name="Favello A."/>
            <person name="Fulton L."/>
            <person name="Gattung S."/>
            <person name="Geisel C."/>
            <person name="Kirsten J."/>
            <person name="Kucaba T."/>
            <person name="Hillier L.W."/>
            <person name="Jier M."/>
            <person name="Johnston L."/>
            <person name="Langston Y."/>
            <person name="Latreille P."/>
            <person name="Louis E.J."/>
            <person name="Macri C."/>
            <person name="Mardis E."/>
            <person name="Menezes S."/>
            <person name="Mouser L."/>
            <person name="Nhan M."/>
            <person name="Rifkin L."/>
            <person name="Riles L."/>
            <person name="St Peter H."/>
            <person name="Trevaskis E."/>
            <person name="Vaughan K."/>
            <person name="Vignati D."/>
            <person name="Wilcox L."/>
            <person name="Wohldman P."/>
            <person name="Waterston R."/>
            <person name="Wilson R."/>
            <person name="Vaudin M."/>
        </authorList>
    </citation>
    <scope>NUCLEOTIDE SEQUENCE [LARGE SCALE GENOMIC DNA]</scope>
    <source>
        <strain>ATCC 204508 / S288c</strain>
    </source>
</reference>
<reference key="3">
    <citation type="journal article" date="2014" name="G3 (Bethesda)">
        <title>The reference genome sequence of Saccharomyces cerevisiae: Then and now.</title>
        <authorList>
            <person name="Engel S.R."/>
            <person name="Dietrich F.S."/>
            <person name="Fisk D.G."/>
            <person name="Binkley G."/>
            <person name="Balakrishnan R."/>
            <person name="Costanzo M.C."/>
            <person name="Dwight S.S."/>
            <person name="Hitz B.C."/>
            <person name="Karra K."/>
            <person name="Nash R.S."/>
            <person name="Weng S."/>
            <person name="Wong E.D."/>
            <person name="Lloyd P."/>
            <person name="Skrzypek M.S."/>
            <person name="Miyasato S.R."/>
            <person name="Simison M."/>
            <person name="Cherry J.M."/>
        </authorList>
    </citation>
    <scope>GENOME REANNOTATION</scope>
    <source>
        <strain>ATCC 204508 / S288c</strain>
    </source>
</reference>
<reference key="4">
    <citation type="journal article" date="2007" name="Genome Res.">
        <title>Approaching a complete repository of sequence-verified protein-encoding clones for Saccharomyces cerevisiae.</title>
        <authorList>
            <person name="Hu Y."/>
            <person name="Rolfs A."/>
            <person name="Bhullar B."/>
            <person name="Murthy T.V.S."/>
            <person name="Zhu C."/>
            <person name="Berger M.F."/>
            <person name="Camargo A.A."/>
            <person name="Kelley F."/>
            <person name="McCarron S."/>
            <person name="Jepson D."/>
            <person name="Richardson A."/>
            <person name="Raphael J."/>
            <person name="Moreira D."/>
            <person name="Taycher E."/>
            <person name="Zuo D."/>
            <person name="Mohr S."/>
            <person name="Kane M.F."/>
            <person name="Williamson J."/>
            <person name="Simpson A.J.G."/>
            <person name="Bulyk M.L."/>
            <person name="Harlow E."/>
            <person name="Marsischky G."/>
            <person name="Kolodner R.D."/>
            <person name="LaBaer J."/>
        </authorList>
    </citation>
    <scope>NUCLEOTIDE SEQUENCE [GENOMIC DNA]</scope>
    <source>
        <strain>ATCC 204508 / S288c</strain>
    </source>
</reference>
<reference key="5">
    <citation type="journal article" date="2005" name="Mol. Cell. Biol.">
        <title>Replication protein A-directed unloading of PCNA by the Ctf18 cohesion establishment complex.</title>
        <authorList>
            <person name="Bylund G.O."/>
            <person name="Burgers P.M."/>
        </authorList>
    </citation>
    <scope>IDENTIFICATION IN THE CTF18-RFC COMPLEX</scope>
    <scope>FUNCTION OF THE CTF18-RFC COMPLEX</scope>
</reference>
<organism>
    <name type="scientific">Saccharomyces cerevisiae (strain ATCC 204508 / S288c)</name>
    <name type="common">Baker's yeast</name>
    <dbReference type="NCBI Taxonomy" id="559292"/>
    <lineage>
        <taxon>Eukaryota</taxon>
        <taxon>Fungi</taxon>
        <taxon>Dikarya</taxon>
        <taxon>Ascomycota</taxon>
        <taxon>Saccharomycotina</taxon>
        <taxon>Saccharomycetes</taxon>
        <taxon>Saccharomycetales</taxon>
        <taxon>Saccharomycetaceae</taxon>
        <taxon>Saccharomyces</taxon>
    </lineage>
</organism>
<keyword id="KW-0002">3D-structure</keyword>
<keyword id="KW-0131">Cell cycle</keyword>
<keyword id="KW-0235">DNA replication</keyword>
<keyword id="KW-0238">DNA-binding</keyword>
<keyword id="KW-0539">Nucleus</keyword>
<keyword id="KW-1185">Reference proteome</keyword>
<comment type="function">
    <text evidence="1 2">Essential for the fidelity of chromosome transmission. Required for the DNA replication block checkpoint. Component of the RFC-like complex CTF18-RFC which is required for efficient establishment of chromosome cohesion during S-phase and may load or unload POL30/PCNA. During a clamp loading circle, the RFC:clamp complex binds to DNA and the recognition of the double-stranded/single-stranded junction stimulates ATP hydrolysis by RFC. The complex presumably provides bipartite ATP sites in which one subunit supplies a catalytic site for hydrolysis of ATP bound to the neighboring subunit. Dissociation of RFC from the clamp leaves the clamp encircling DNA.</text>
</comment>
<comment type="subunit">
    <text evidence="1 2">Component of the CTF18-RFC complex, which consists of CTF18, CTF8, DSCC1, RFC2, RFC3, RFC4 and RFC5.</text>
</comment>
<comment type="interaction">
    <interactant intactId="EBI-5216">
        <id>P38877</id>
    </interactant>
    <interactant intactId="EBI-4560">
        <id>P49956</id>
        <label>CTF18</label>
    </interactant>
    <organismsDiffer>false</organismsDiffer>
    <experiments>5</experiments>
</comment>
<comment type="interaction">
    <interactant intactId="EBI-5216">
        <id>P38877</id>
    </interactant>
    <interactant intactId="EBI-5661">
        <id>P25559</id>
        <label>DCC1</label>
    </interactant>
    <organismsDiffer>false</organismsDiffer>
    <experiments>3</experiments>
</comment>
<comment type="interaction">
    <interactant intactId="EBI-5216">
        <id>P38877</id>
    </interactant>
    <interactant intactId="EBI-14992">
        <id>P40348</id>
        <label>RFC2</label>
    </interactant>
    <organismsDiffer>false</organismsDiffer>
    <experiments>3</experiments>
</comment>
<comment type="interaction">
    <interactant intactId="EBI-5216">
        <id>P38877</id>
    </interactant>
    <interactant intactId="EBI-15000">
        <id>P38629</id>
        <label>RFC3</label>
    </interactant>
    <organismsDiffer>false</organismsDiffer>
    <experiments>3</experiments>
</comment>
<comment type="interaction">
    <interactant intactId="EBI-5216">
        <id>P38877</id>
    </interactant>
    <interactant intactId="EBI-15009">
        <id>P40339</id>
        <label>RFC4</label>
    </interactant>
    <organismsDiffer>false</organismsDiffer>
    <experiments>3</experiments>
</comment>
<comment type="interaction">
    <interactant intactId="EBI-5216">
        <id>P38877</id>
    </interactant>
    <interactant intactId="EBI-15016">
        <id>P38251</id>
        <label>RFC5</label>
    </interactant>
    <organismsDiffer>false</organismsDiffer>
    <experiments>3</experiments>
</comment>
<comment type="subcellular location">
    <subcellularLocation>
        <location evidence="1">Nucleus</location>
    </subcellularLocation>
    <text>Associates with chromatin.</text>
</comment>
<comment type="similarity">
    <text evidence="3">Belongs to the CTF8 family.</text>
</comment>
<evidence type="ECO:0000269" key="1">
    <source>
    </source>
</evidence>
<evidence type="ECO:0000269" key="2">
    <source>
    </source>
</evidence>
<evidence type="ECO:0000305" key="3"/>
<evidence type="ECO:0007829" key="4">
    <source>
        <dbReference type="PDB" id="5MSM"/>
    </source>
</evidence>